<dbReference type="SMR" id="P80502"/>
<dbReference type="STRING" id="4113.P80502"/>
<dbReference type="PaxDb" id="4113-PGSC0003DMT400069855"/>
<dbReference type="eggNOG" id="KOG0356">
    <property type="taxonomic scope" value="Eukaryota"/>
</dbReference>
<dbReference type="InParanoid" id="P80502"/>
<dbReference type="Proteomes" id="UP000011115">
    <property type="component" value="Unassembled WGS sequence"/>
</dbReference>
<dbReference type="GO" id="GO:0005739">
    <property type="term" value="C:mitochondrion"/>
    <property type="evidence" value="ECO:0007669"/>
    <property type="project" value="UniProtKB-SubCell"/>
</dbReference>
<dbReference type="GO" id="GO:0005524">
    <property type="term" value="F:ATP binding"/>
    <property type="evidence" value="ECO:0007669"/>
    <property type="project" value="UniProtKB-KW"/>
</dbReference>
<dbReference type="GO" id="GO:0140662">
    <property type="term" value="F:ATP-dependent protein folding chaperone"/>
    <property type="evidence" value="ECO:0007669"/>
    <property type="project" value="InterPro"/>
</dbReference>
<dbReference type="GO" id="GO:0042026">
    <property type="term" value="P:protein refolding"/>
    <property type="evidence" value="ECO:0007669"/>
    <property type="project" value="InterPro"/>
</dbReference>
<dbReference type="Gene3D" id="1.10.560.10">
    <property type="entry name" value="GroEL-like equatorial domain"/>
    <property type="match status" value="1"/>
</dbReference>
<dbReference type="InterPro" id="IPR001844">
    <property type="entry name" value="Cpn60/GroEL"/>
</dbReference>
<dbReference type="InterPro" id="IPR027413">
    <property type="entry name" value="GROEL-like_equatorial_sf"/>
</dbReference>
<dbReference type="PANTHER" id="PTHR45633">
    <property type="entry name" value="60 KDA HEAT SHOCK PROTEIN, MITOCHONDRIAL"/>
    <property type="match status" value="1"/>
</dbReference>
<dbReference type="SUPFAM" id="SSF48592">
    <property type="entry name" value="GroEL equatorial domain-like"/>
    <property type="match status" value="1"/>
</dbReference>
<keyword id="KW-0067">ATP-binding</keyword>
<keyword id="KW-0143">Chaperone</keyword>
<keyword id="KW-0903">Direct protein sequencing</keyword>
<keyword id="KW-0496">Mitochondrion</keyword>
<keyword id="KW-0547">Nucleotide-binding</keyword>
<keyword id="KW-1185">Reference proteome</keyword>
<keyword id="KW-0346">Stress response</keyword>
<comment type="function">
    <text>Implicated in mitochondrial protein import and macromolecular assembly. May facilitate the correct folding of imported proteins. May also prevent misfolding and promote the refolding and proper assembly of unfolded polypeptides generated under stress conditions in the mitochondrial matrix.</text>
</comment>
<comment type="subcellular location">
    <subcellularLocation>
        <location>Mitochondrion</location>
    </subcellularLocation>
</comment>
<comment type="induction">
    <text>By heat shock.</text>
</comment>
<comment type="similarity">
    <text evidence="1">Belongs to the chaperonin (HSP60) family.</text>
</comment>
<accession>P80502</accession>
<proteinExistence type="evidence at protein level"/>
<protein>
    <recommendedName>
        <fullName>Chaperonin HSP60, mitochondrial</fullName>
    </recommendedName>
</protein>
<reference key="1">
    <citation type="journal article" date="1996" name="Plant J.">
        <title>New insights into the composition, molecular mass and stoichiometry of the protein complexes of plant mitochondria.</title>
        <authorList>
            <person name="Jansch L."/>
            <person name="Kruft V."/>
            <person name="Schmitz U.K."/>
            <person name="Braun H.P."/>
        </authorList>
    </citation>
    <scope>PROTEIN SEQUENCE</scope>
    <source>
        <tissue>Tuber</tissue>
    </source>
</reference>
<reference key="2">
    <citation type="journal article" date="1998" name="Biochem. J.">
        <title>Plant mitochondrial pyruvate dehydrogenase complex: purification and identification of catalytic components in potato.</title>
        <authorList>
            <person name="Millar A.H."/>
            <person name="Knorpp C."/>
            <person name="Leaver C.J."/>
            <person name="Hill S.A."/>
        </authorList>
    </citation>
    <scope>PROTEIN SEQUENCE OF 1-15</scope>
    <source>
        <strain>cv. Romano</strain>
        <tissue>Tuber</tissue>
    </source>
</reference>
<name>CH60_SOLTU</name>
<organism>
    <name type="scientific">Solanum tuberosum</name>
    <name type="common">Potato</name>
    <dbReference type="NCBI Taxonomy" id="4113"/>
    <lineage>
        <taxon>Eukaryota</taxon>
        <taxon>Viridiplantae</taxon>
        <taxon>Streptophyta</taxon>
        <taxon>Embryophyta</taxon>
        <taxon>Tracheophyta</taxon>
        <taxon>Spermatophyta</taxon>
        <taxon>Magnoliopsida</taxon>
        <taxon>eudicotyledons</taxon>
        <taxon>Gunneridae</taxon>
        <taxon>Pentapetalae</taxon>
        <taxon>asterids</taxon>
        <taxon>lamiids</taxon>
        <taxon>Solanales</taxon>
        <taxon>Solanaceae</taxon>
        <taxon>Solanoideae</taxon>
        <taxon>Solaneae</taxon>
        <taxon>Solanum</taxon>
    </lineage>
</organism>
<evidence type="ECO:0000305" key="1"/>
<sequence>AAKDIKFGVEARGLMLQGVEQLADAVKVTMGPKGRNVVIE</sequence>
<feature type="chain" id="PRO_0000063629" description="Chaperonin HSP60, mitochondrial">
    <location>
        <begin position="1"/>
        <end position="40" status="greater than"/>
    </location>
</feature>
<feature type="non-terminal residue">
    <location>
        <position position="40"/>
    </location>
</feature>